<comment type="function">
    <text evidence="1">Presumably involved in the processing and regular turnover of intracellular proteins. Catalyzes the removal of unsubstituted N-terminal amino acids from various peptides.</text>
</comment>
<comment type="catalytic activity">
    <reaction evidence="1">
        <text>Release of an N-terminal amino acid, Xaa-|-Yaa-, in which Xaa is preferably Leu, but may be other amino acids including Pro although not Arg or Lys, and Yaa may be Pro. Amino acid amides and methyl esters are also readily hydrolyzed, but rates on arylamides are exceedingly low.</text>
        <dbReference type="EC" id="3.4.11.1"/>
    </reaction>
</comment>
<comment type="catalytic activity">
    <reaction evidence="1">
        <text>Release of an N-terminal amino acid, preferentially leucine, but not glutamic or aspartic acids.</text>
        <dbReference type="EC" id="3.4.11.10"/>
    </reaction>
</comment>
<comment type="cofactor">
    <cofactor evidence="1">
        <name>Mn(2+)</name>
        <dbReference type="ChEBI" id="CHEBI:29035"/>
    </cofactor>
    <text evidence="1">Binds 2 manganese ions per subunit.</text>
</comment>
<comment type="subcellular location">
    <subcellularLocation>
        <location evidence="1">Cytoplasm</location>
    </subcellularLocation>
</comment>
<comment type="similarity">
    <text evidence="1">Belongs to the peptidase M17 family.</text>
</comment>
<keyword id="KW-0031">Aminopeptidase</keyword>
<keyword id="KW-0963">Cytoplasm</keyword>
<keyword id="KW-0378">Hydrolase</keyword>
<keyword id="KW-0464">Manganese</keyword>
<keyword id="KW-0479">Metal-binding</keyword>
<keyword id="KW-0645">Protease</keyword>
<accession>B1XEN9</accession>
<evidence type="ECO:0000255" key="1">
    <source>
        <dbReference type="HAMAP-Rule" id="MF_00181"/>
    </source>
</evidence>
<reference key="1">
    <citation type="journal article" date="2008" name="J. Bacteriol.">
        <title>The complete genome sequence of Escherichia coli DH10B: insights into the biology of a laboratory workhorse.</title>
        <authorList>
            <person name="Durfee T."/>
            <person name="Nelson R."/>
            <person name="Baldwin S."/>
            <person name="Plunkett G. III"/>
            <person name="Burland V."/>
            <person name="Mau B."/>
            <person name="Petrosino J.F."/>
            <person name="Qin X."/>
            <person name="Muzny D.M."/>
            <person name="Ayele M."/>
            <person name="Gibbs R.A."/>
            <person name="Csorgo B."/>
            <person name="Posfai G."/>
            <person name="Weinstock G.M."/>
            <person name="Blattner F.R."/>
        </authorList>
    </citation>
    <scope>NUCLEOTIDE SEQUENCE [LARGE SCALE GENOMIC DNA]</scope>
    <source>
        <strain>K12 / DH10B</strain>
    </source>
</reference>
<organism>
    <name type="scientific">Escherichia coli (strain K12 / DH10B)</name>
    <dbReference type="NCBI Taxonomy" id="316385"/>
    <lineage>
        <taxon>Bacteria</taxon>
        <taxon>Pseudomonadati</taxon>
        <taxon>Pseudomonadota</taxon>
        <taxon>Gammaproteobacteria</taxon>
        <taxon>Enterobacterales</taxon>
        <taxon>Enterobacteriaceae</taxon>
        <taxon>Escherichia</taxon>
    </lineage>
</organism>
<protein>
    <recommendedName>
        <fullName evidence="1">Probable cytosol aminopeptidase</fullName>
        <ecNumber evidence="1">3.4.11.1</ecNumber>
    </recommendedName>
    <alternativeName>
        <fullName evidence="1">Leucine aminopeptidase</fullName>
        <shortName evidence="1">LAP</shortName>
        <ecNumber evidence="1">3.4.11.10</ecNumber>
    </alternativeName>
    <alternativeName>
        <fullName evidence="1">Leucyl aminopeptidase</fullName>
    </alternativeName>
</protein>
<name>AMPA_ECODH</name>
<proteinExistence type="inferred from homology"/>
<feature type="chain" id="PRO_1000098321" description="Probable cytosol aminopeptidase">
    <location>
        <begin position="1"/>
        <end position="503"/>
    </location>
</feature>
<feature type="active site" evidence="1">
    <location>
        <position position="282"/>
    </location>
</feature>
<feature type="active site" evidence="1">
    <location>
        <position position="356"/>
    </location>
</feature>
<feature type="binding site" evidence="1">
    <location>
        <position position="270"/>
    </location>
    <ligand>
        <name>Mn(2+)</name>
        <dbReference type="ChEBI" id="CHEBI:29035"/>
        <label>2</label>
    </ligand>
</feature>
<feature type="binding site" evidence="1">
    <location>
        <position position="275"/>
    </location>
    <ligand>
        <name>Mn(2+)</name>
        <dbReference type="ChEBI" id="CHEBI:29035"/>
        <label>1</label>
    </ligand>
</feature>
<feature type="binding site" evidence="1">
    <location>
        <position position="275"/>
    </location>
    <ligand>
        <name>Mn(2+)</name>
        <dbReference type="ChEBI" id="CHEBI:29035"/>
        <label>2</label>
    </ligand>
</feature>
<feature type="binding site" evidence="1">
    <location>
        <position position="293"/>
    </location>
    <ligand>
        <name>Mn(2+)</name>
        <dbReference type="ChEBI" id="CHEBI:29035"/>
        <label>2</label>
    </ligand>
</feature>
<feature type="binding site" evidence="1">
    <location>
        <position position="352"/>
    </location>
    <ligand>
        <name>Mn(2+)</name>
        <dbReference type="ChEBI" id="CHEBI:29035"/>
        <label>1</label>
    </ligand>
</feature>
<feature type="binding site" evidence="1">
    <location>
        <position position="354"/>
    </location>
    <ligand>
        <name>Mn(2+)</name>
        <dbReference type="ChEBI" id="CHEBI:29035"/>
        <label>1</label>
    </ligand>
</feature>
<feature type="binding site" evidence="1">
    <location>
        <position position="354"/>
    </location>
    <ligand>
        <name>Mn(2+)</name>
        <dbReference type="ChEBI" id="CHEBI:29035"/>
        <label>2</label>
    </ligand>
</feature>
<sequence>MEFSVKSGSPEKQRSACIVVGVFEPRRLSPIAEQLDKISDGYISALLRRGELEGKPGQTLLLHHVPNVLSERILLIGCGKERELDERQYKQVIQKTINTLNDTGSMEAVCFLTELHVKGRNNYWKVRQAVETAKETLYSFDQLKTNKSEPRRPLRKMVFNVPTRRELTSGERAIQHGLAIAAGIKAAKDLGNMPPNICNAAYLASQARQLADSYSKNVITRVIGEQQMKELGMHSYLAVGQGSQNESLMSVIEYKGNASEDARPIVLVGKGLTFDSGGISIKPSEGMDEMKYDMCGAAAVYGVMRMVAELQLPINVIGVLAGCENMPGGRAYRPGDVLTTMSGQTVEVLNTDAEGRLVLCDVLTYVERFEPEAVIDVATLTGACVIALGHHITGLMANHNPLAHELIAASEQSGDRAWRLPLGDEYQEQLESNFADMANIGGRPGGAITAGCFLSRFTRKYNWAHLDIAGTAWRSGKAKGATGRPVALLAQFLLNRAGFNGEE</sequence>
<gene>
    <name evidence="1" type="primary">pepA</name>
    <name type="ordered locus">ECDH10B_4453</name>
</gene>
<dbReference type="EC" id="3.4.11.1" evidence="1"/>
<dbReference type="EC" id="3.4.11.10" evidence="1"/>
<dbReference type="EMBL" id="CP000948">
    <property type="protein sequence ID" value="ACB05241.1"/>
    <property type="molecule type" value="Genomic_DNA"/>
</dbReference>
<dbReference type="RefSeq" id="WP_000397144.1">
    <property type="nucleotide sequence ID" value="NC_010473.1"/>
</dbReference>
<dbReference type="SMR" id="B1XEN9"/>
<dbReference type="MEROPS" id="M17.003"/>
<dbReference type="GeneID" id="93777558"/>
<dbReference type="KEGG" id="ecd:ECDH10B_4453"/>
<dbReference type="HOGENOM" id="CLU_013734_2_2_6"/>
<dbReference type="GO" id="GO:0005737">
    <property type="term" value="C:cytoplasm"/>
    <property type="evidence" value="ECO:0007669"/>
    <property type="project" value="UniProtKB-SubCell"/>
</dbReference>
<dbReference type="GO" id="GO:0030145">
    <property type="term" value="F:manganese ion binding"/>
    <property type="evidence" value="ECO:0007669"/>
    <property type="project" value="UniProtKB-UniRule"/>
</dbReference>
<dbReference type="GO" id="GO:0070006">
    <property type="term" value="F:metalloaminopeptidase activity"/>
    <property type="evidence" value="ECO:0007669"/>
    <property type="project" value="InterPro"/>
</dbReference>
<dbReference type="GO" id="GO:0006508">
    <property type="term" value="P:proteolysis"/>
    <property type="evidence" value="ECO:0007669"/>
    <property type="project" value="UniProtKB-KW"/>
</dbReference>
<dbReference type="CDD" id="cd00433">
    <property type="entry name" value="Peptidase_M17"/>
    <property type="match status" value="1"/>
</dbReference>
<dbReference type="FunFam" id="3.40.220.10:FF:000001">
    <property type="entry name" value="Probable cytosol aminopeptidase"/>
    <property type="match status" value="1"/>
</dbReference>
<dbReference type="FunFam" id="3.40.630.10:FF:000004">
    <property type="entry name" value="Probable cytosol aminopeptidase"/>
    <property type="match status" value="1"/>
</dbReference>
<dbReference type="Gene3D" id="3.40.220.10">
    <property type="entry name" value="Leucine Aminopeptidase, subunit E, domain 1"/>
    <property type="match status" value="1"/>
</dbReference>
<dbReference type="Gene3D" id="3.40.630.10">
    <property type="entry name" value="Zn peptidases"/>
    <property type="match status" value="1"/>
</dbReference>
<dbReference type="HAMAP" id="MF_00181">
    <property type="entry name" value="Cytosol_peptidase_M17"/>
    <property type="match status" value="1"/>
</dbReference>
<dbReference type="InterPro" id="IPR011356">
    <property type="entry name" value="Leucine_aapep/pepB"/>
</dbReference>
<dbReference type="InterPro" id="IPR043472">
    <property type="entry name" value="Macro_dom-like"/>
</dbReference>
<dbReference type="InterPro" id="IPR000819">
    <property type="entry name" value="Peptidase_M17_C"/>
</dbReference>
<dbReference type="InterPro" id="IPR023042">
    <property type="entry name" value="Peptidase_M17_leu_NH2_pept"/>
</dbReference>
<dbReference type="InterPro" id="IPR008283">
    <property type="entry name" value="Peptidase_M17_N"/>
</dbReference>
<dbReference type="NCBIfam" id="NF002072">
    <property type="entry name" value="PRK00913.1-1"/>
    <property type="match status" value="1"/>
</dbReference>
<dbReference type="NCBIfam" id="NF002073">
    <property type="entry name" value="PRK00913.1-2"/>
    <property type="match status" value="1"/>
</dbReference>
<dbReference type="NCBIfam" id="NF002074">
    <property type="entry name" value="PRK00913.1-4"/>
    <property type="match status" value="1"/>
</dbReference>
<dbReference type="PANTHER" id="PTHR11963:SF23">
    <property type="entry name" value="CYTOSOL AMINOPEPTIDASE"/>
    <property type="match status" value="1"/>
</dbReference>
<dbReference type="PANTHER" id="PTHR11963">
    <property type="entry name" value="LEUCINE AMINOPEPTIDASE-RELATED"/>
    <property type="match status" value="1"/>
</dbReference>
<dbReference type="Pfam" id="PF00883">
    <property type="entry name" value="Peptidase_M17"/>
    <property type="match status" value="1"/>
</dbReference>
<dbReference type="Pfam" id="PF02789">
    <property type="entry name" value="Peptidase_M17_N"/>
    <property type="match status" value="1"/>
</dbReference>
<dbReference type="PRINTS" id="PR00481">
    <property type="entry name" value="LAMNOPPTDASE"/>
</dbReference>
<dbReference type="SUPFAM" id="SSF52949">
    <property type="entry name" value="Macro domain-like"/>
    <property type="match status" value="1"/>
</dbReference>
<dbReference type="SUPFAM" id="SSF53187">
    <property type="entry name" value="Zn-dependent exopeptidases"/>
    <property type="match status" value="1"/>
</dbReference>
<dbReference type="PROSITE" id="PS00631">
    <property type="entry name" value="CYTOSOL_AP"/>
    <property type="match status" value="1"/>
</dbReference>